<proteinExistence type="inferred from homology"/>
<feature type="chain" id="PRO_1000085225" description="Chaperone protein DnaJ">
    <location>
        <begin position="1"/>
        <end position="374"/>
    </location>
</feature>
<feature type="domain" description="J" evidence="1">
    <location>
        <begin position="5"/>
        <end position="70"/>
    </location>
</feature>
<feature type="repeat" description="CXXCXGXG motif">
    <location>
        <begin position="144"/>
        <end position="151"/>
    </location>
</feature>
<feature type="repeat" description="CXXCXGXG motif">
    <location>
        <begin position="161"/>
        <end position="168"/>
    </location>
</feature>
<feature type="repeat" description="CXXCXGXG motif">
    <location>
        <begin position="183"/>
        <end position="190"/>
    </location>
</feature>
<feature type="repeat" description="CXXCXGXG motif">
    <location>
        <begin position="197"/>
        <end position="204"/>
    </location>
</feature>
<feature type="zinc finger region" description="CR-type" evidence="1">
    <location>
        <begin position="131"/>
        <end position="209"/>
    </location>
</feature>
<feature type="binding site" evidence="1">
    <location>
        <position position="144"/>
    </location>
    <ligand>
        <name>Zn(2+)</name>
        <dbReference type="ChEBI" id="CHEBI:29105"/>
        <label>1</label>
    </ligand>
</feature>
<feature type="binding site" evidence="1">
    <location>
        <position position="147"/>
    </location>
    <ligand>
        <name>Zn(2+)</name>
        <dbReference type="ChEBI" id="CHEBI:29105"/>
        <label>1</label>
    </ligand>
</feature>
<feature type="binding site" evidence="1">
    <location>
        <position position="161"/>
    </location>
    <ligand>
        <name>Zn(2+)</name>
        <dbReference type="ChEBI" id="CHEBI:29105"/>
        <label>2</label>
    </ligand>
</feature>
<feature type="binding site" evidence="1">
    <location>
        <position position="164"/>
    </location>
    <ligand>
        <name>Zn(2+)</name>
        <dbReference type="ChEBI" id="CHEBI:29105"/>
        <label>2</label>
    </ligand>
</feature>
<feature type="binding site" evidence="1">
    <location>
        <position position="183"/>
    </location>
    <ligand>
        <name>Zn(2+)</name>
        <dbReference type="ChEBI" id="CHEBI:29105"/>
        <label>2</label>
    </ligand>
</feature>
<feature type="binding site" evidence="1">
    <location>
        <position position="186"/>
    </location>
    <ligand>
        <name>Zn(2+)</name>
        <dbReference type="ChEBI" id="CHEBI:29105"/>
        <label>2</label>
    </ligand>
</feature>
<feature type="binding site" evidence="1">
    <location>
        <position position="197"/>
    </location>
    <ligand>
        <name>Zn(2+)</name>
        <dbReference type="ChEBI" id="CHEBI:29105"/>
        <label>1</label>
    </ligand>
</feature>
<feature type="binding site" evidence="1">
    <location>
        <position position="200"/>
    </location>
    <ligand>
        <name>Zn(2+)</name>
        <dbReference type="ChEBI" id="CHEBI:29105"/>
        <label>1</label>
    </ligand>
</feature>
<protein>
    <recommendedName>
        <fullName evidence="1">Chaperone protein DnaJ</fullName>
    </recommendedName>
</protein>
<reference key="1">
    <citation type="submission" date="2007-06" db="EMBL/GenBank/DDBJ databases">
        <title>Complete sequence of Marinomonas sp. MWYL1.</title>
        <authorList>
            <consortium name="US DOE Joint Genome Institute"/>
            <person name="Copeland A."/>
            <person name="Lucas S."/>
            <person name="Lapidus A."/>
            <person name="Barry K."/>
            <person name="Glavina del Rio T."/>
            <person name="Dalin E."/>
            <person name="Tice H."/>
            <person name="Pitluck S."/>
            <person name="Kiss H."/>
            <person name="Brettin T."/>
            <person name="Bruce D."/>
            <person name="Detter J.C."/>
            <person name="Han C."/>
            <person name="Schmutz J."/>
            <person name="Larimer F."/>
            <person name="Land M."/>
            <person name="Hauser L."/>
            <person name="Kyrpides N."/>
            <person name="Kim E."/>
            <person name="Johnston A.W.B."/>
            <person name="Todd J.D."/>
            <person name="Rogers R."/>
            <person name="Wexler M."/>
            <person name="Bond P.L."/>
            <person name="Li Y."/>
            <person name="Richardson P."/>
        </authorList>
    </citation>
    <scope>NUCLEOTIDE SEQUENCE [LARGE SCALE GENOMIC DNA]</scope>
    <source>
        <strain>MWYL1</strain>
    </source>
</reference>
<sequence length="374" mass="40246">MSKRDYYDVLGVAKDADKKDIKKAYRSLANKYHPDKNPDNPEALDKFKELAEAYEILSSDDKRAAYDRFGHDGVNGQAGGYGGAGAGGFSDIFGDVFGDIFGGGGGGQSRTRRGSDLRYTLELDLEQAVWGCEEKIRIPTLVNCKTCDGSGAKKGSTPKTCGTCGGAGQVRMSQGFFSVQQTCPECHGAGQVISDPCRDCHGQGRVQEYKTLNVKIPAGVDTGDRIRLSGEGEAGTHGGPAGDLFVQVSVKPHSIFERDGANLYCEVPISFTTAALGGEIDVPTLDGRVRLKVTAECQSGKLFRLRNKGVKPVRGGPVGDLICKVVVETPVNLTSRQKELFTELAESMGEGTDHSPKQKSWFDGVKRFFDDIKK</sequence>
<keyword id="KW-0143">Chaperone</keyword>
<keyword id="KW-0963">Cytoplasm</keyword>
<keyword id="KW-0235">DNA replication</keyword>
<keyword id="KW-0479">Metal-binding</keyword>
<keyword id="KW-0677">Repeat</keyword>
<keyword id="KW-0346">Stress response</keyword>
<keyword id="KW-0862">Zinc</keyword>
<keyword id="KW-0863">Zinc-finger</keyword>
<gene>
    <name evidence="1" type="primary">dnaJ</name>
    <name type="ordered locus">Mmwyl1_3963</name>
</gene>
<evidence type="ECO:0000255" key="1">
    <source>
        <dbReference type="HAMAP-Rule" id="MF_01152"/>
    </source>
</evidence>
<name>DNAJ_MARMS</name>
<comment type="function">
    <text evidence="1">Participates actively in the response to hyperosmotic and heat shock by preventing the aggregation of stress-denatured proteins and by disaggregating proteins, also in an autonomous, DnaK-independent fashion. Unfolded proteins bind initially to DnaJ; upon interaction with the DnaJ-bound protein, DnaK hydrolyzes its bound ATP, resulting in the formation of a stable complex. GrpE releases ADP from DnaK; ATP binding to DnaK triggers the release of the substrate protein, thus completing the reaction cycle. Several rounds of ATP-dependent interactions between DnaJ, DnaK and GrpE are required for fully efficient folding. Also involved, together with DnaK and GrpE, in the DNA replication of plasmids through activation of initiation proteins.</text>
</comment>
<comment type="cofactor">
    <cofactor evidence="1">
        <name>Zn(2+)</name>
        <dbReference type="ChEBI" id="CHEBI:29105"/>
    </cofactor>
    <text evidence="1">Binds 2 Zn(2+) ions per monomer.</text>
</comment>
<comment type="subunit">
    <text evidence="1">Homodimer.</text>
</comment>
<comment type="subcellular location">
    <subcellularLocation>
        <location evidence="1">Cytoplasm</location>
    </subcellularLocation>
</comment>
<comment type="domain">
    <text evidence="1">The J domain is necessary and sufficient to stimulate DnaK ATPase activity. Zinc center 1 plays an important role in the autonomous, DnaK-independent chaperone activity of DnaJ. Zinc center 2 is essential for interaction with DnaK and for DnaJ activity.</text>
</comment>
<comment type="similarity">
    <text evidence="1">Belongs to the DnaJ family.</text>
</comment>
<dbReference type="EMBL" id="CP000749">
    <property type="protein sequence ID" value="ABR72860.1"/>
    <property type="molecule type" value="Genomic_DNA"/>
</dbReference>
<dbReference type="SMR" id="A6W2D1"/>
<dbReference type="STRING" id="400668.Mmwyl1_3963"/>
<dbReference type="KEGG" id="mmw:Mmwyl1_3963"/>
<dbReference type="eggNOG" id="COG0484">
    <property type="taxonomic scope" value="Bacteria"/>
</dbReference>
<dbReference type="HOGENOM" id="CLU_017633_0_7_6"/>
<dbReference type="OrthoDB" id="9779889at2"/>
<dbReference type="GO" id="GO:0005737">
    <property type="term" value="C:cytoplasm"/>
    <property type="evidence" value="ECO:0007669"/>
    <property type="project" value="UniProtKB-SubCell"/>
</dbReference>
<dbReference type="GO" id="GO:0005524">
    <property type="term" value="F:ATP binding"/>
    <property type="evidence" value="ECO:0007669"/>
    <property type="project" value="InterPro"/>
</dbReference>
<dbReference type="GO" id="GO:0031072">
    <property type="term" value="F:heat shock protein binding"/>
    <property type="evidence" value="ECO:0007669"/>
    <property type="project" value="InterPro"/>
</dbReference>
<dbReference type="GO" id="GO:0051082">
    <property type="term" value="F:unfolded protein binding"/>
    <property type="evidence" value="ECO:0007669"/>
    <property type="project" value="UniProtKB-UniRule"/>
</dbReference>
<dbReference type="GO" id="GO:0008270">
    <property type="term" value="F:zinc ion binding"/>
    <property type="evidence" value="ECO:0007669"/>
    <property type="project" value="UniProtKB-UniRule"/>
</dbReference>
<dbReference type="GO" id="GO:0051085">
    <property type="term" value="P:chaperone cofactor-dependent protein refolding"/>
    <property type="evidence" value="ECO:0007669"/>
    <property type="project" value="TreeGrafter"/>
</dbReference>
<dbReference type="GO" id="GO:0006260">
    <property type="term" value="P:DNA replication"/>
    <property type="evidence" value="ECO:0007669"/>
    <property type="project" value="UniProtKB-KW"/>
</dbReference>
<dbReference type="GO" id="GO:0042026">
    <property type="term" value="P:protein refolding"/>
    <property type="evidence" value="ECO:0007669"/>
    <property type="project" value="TreeGrafter"/>
</dbReference>
<dbReference type="GO" id="GO:0009408">
    <property type="term" value="P:response to heat"/>
    <property type="evidence" value="ECO:0007669"/>
    <property type="project" value="InterPro"/>
</dbReference>
<dbReference type="CDD" id="cd06257">
    <property type="entry name" value="DnaJ"/>
    <property type="match status" value="1"/>
</dbReference>
<dbReference type="CDD" id="cd10747">
    <property type="entry name" value="DnaJ_C"/>
    <property type="match status" value="1"/>
</dbReference>
<dbReference type="CDD" id="cd10719">
    <property type="entry name" value="DnaJ_zf"/>
    <property type="match status" value="1"/>
</dbReference>
<dbReference type="FunFam" id="1.10.287.110:FF:000034">
    <property type="entry name" value="Chaperone protein DnaJ"/>
    <property type="match status" value="1"/>
</dbReference>
<dbReference type="FunFam" id="2.10.230.10:FF:000002">
    <property type="entry name" value="Molecular chaperone DnaJ"/>
    <property type="match status" value="1"/>
</dbReference>
<dbReference type="FunFam" id="2.60.260.20:FF:000004">
    <property type="entry name" value="Molecular chaperone DnaJ"/>
    <property type="match status" value="1"/>
</dbReference>
<dbReference type="Gene3D" id="1.10.287.110">
    <property type="entry name" value="DnaJ domain"/>
    <property type="match status" value="1"/>
</dbReference>
<dbReference type="Gene3D" id="2.10.230.10">
    <property type="entry name" value="Heat shock protein DnaJ, cysteine-rich domain"/>
    <property type="match status" value="1"/>
</dbReference>
<dbReference type="Gene3D" id="2.60.260.20">
    <property type="entry name" value="Urease metallochaperone UreE, N-terminal domain"/>
    <property type="match status" value="2"/>
</dbReference>
<dbReference type="HAMAP" id="MF_01152">
    <property type="entry name" value="DnaJ"/>
    <property type="match status" value="1"/>
</dbReference>
<dbReference type="InterPro" id="IPR012724">
    <property type="entry name" value="DnaJ"/>
</dbReference>
<dbReference type="InterPro" id="IPR002939">
    <property type="entry name" value="DnaJ_C"/>
</dbReference>
<dbReference type="InterPro" id="IPR001623">
    <property type="entry name" value="DnaJ_domain"/>
</dbReference>
<dbReference type="InterPro" id="IPR008971">
    <property type="entry name" value="HSP40/DnaJ_pept-bd"/>
</dbReference>
<dbReference type="InterPro" id="IPR001305">
    <property type="entry name" value="HSP_DnaJ_Cys-rich_dom"/>
</dbReference>
<dbReference type="InterPro" id="IPR036410">
    <property type="entry name" value="HSP_DnaJ_Cys-rich_dom_sf"/>
</dbReference>
<dbReference type="InterPro" id="IPR036869">
    <property type="entry name" value="J_dom_sf"/>
</dbReference>
<dbReference type="NCBIfam" id="TIGR02349">
    <property type="entry name" value="DnaJ_bact"/>
    <property type="match status" value="1"/>
</dbReference>
<dbReference type="NCBIfam" id="NF008035">
    <property type="entry name" value="PRK10767.1"/>
    <property type="match status" value="1"/>
</dbReference>
<dbReference type="PANTHER" id="PTHR43096:SF48">
    <property type="entry name" value="CHAPERONE PROTEIN DNAJ"/>
    <property type="match status" value="1"/>
</dbReference>
<dbReference type="PANTHER" id="PTHR43096">
    <property type="entry name" value="DNAJ HOMOLOG 1, MITOCHONDRIAL-RELATED"/>
    <property type="match status" value="1"/>
</dbReference>
<dbReference type="Pfam" id="PF00226">
    <property type="entry name" value="DnaJ"/>
    <property type="match status" value="1"/>
</dbReference>
<dbReference type="Pfam" id="PF01556">
    <property type="entry name" value="DnaJ_C"/>
    <property type="match status" value="1"/>
</dbReference>
<dbReference type="Pfam" id="PF00684">
    <property type="entry name" value="DnaJ_CXXCXGXG"/>
    <property type="match status" value="1"/>
</dbReference>
<dbReference type="PRINTS" id="PR00625">
    <property type="entry name" value="JDOMAIN"/>
</dbReference>
<dbReference type="SMART" id="SM00271">
    <property type="entry name" value="DnaJ"/>
    <property type="match status" value="1"/>
</dbReference>
<dbReference type="SUPFAM" id="SSF46565">
    <property type="entry name" value="Chaperone J-domain"/>
    <property type="match status" value="1"/>
</dbReference>
<dbReference type="SUPFAM" id="SSF57938">
    <property type="entry name" value="DnaJ/Hsp40 cysteine-rich domain"/>
    <property type="match status" value="1"/>
</dbReference>
<dbReference type="SUPFAM" id="SSF49493">
    <property type="entry name" value="HSP40/DnaJ peptide-binding domain"/>
    <property type="match status" value="2"/>
</dbReference>
<dbReference type="PROSITE" id="PS50076">
    <property type="entry name" value="DNAJ_2"/>
    <property type="match status" value="1"/>
</dbReference>
<dbReference type="PROSITE" id="PS51188">
    <property type="entry name" value="ZF_CR"/>
    <property type="match status" value="1"/>
</dbReference>
<organism>
    <name type="scientific">Marinomonas sp. (strain MWYL1)</name>
    <dbReference type="NCBI Taxonomy" id="400668"/>
    <lineage>
        <taxon>Bacteria</taxon>
        <taxon>Pseudomonadati</taxon>
        <taxon>Pseudomonadota</taxon>
        <taxon>Gammaproteobacteria</taxon>
        <taxon>Oceanospirillales</taxon>
        <taxon>Oceanospirillaceae</taxon>
        <taxon>Marinomonas</taxon>
    </lineage>
</organism>
<accession>A6W2D1</accession>